<organism>
    <name type="scientific">Vibrio vulnificus (strain YJ016)</name>
    <dbReference type="NCBI Taxonomy" id="196600"/>
    <lineage>
        <taxon>Bacteria</taxon>
        <taxon>Pseudomonadati</taxon>
        <taxon>Pseudomonadota</taxon>
        <taxon>Gammaproteobacteria</taxon>
        <taxon>Vibrionales</taxon>
        <taxon>Vibrionaceae</taxon>
        <taxon>Vibrio</taxon>
    </lineage>
</organism>
<protein>
    <recommendedName>
        <fullName evidence="1">Histidinol dehydrogenase</fullName>
        <shortName evidence="1">HDH</shortName>
        <ecNumber evidence="1">1.1.1.23</ecNumber>
    </recommendedName>
</protein>
<feature type="chain" id="PRO_0000135878" description="Histidinol dehydrogenase">
    <location>
        <begin position="1"/>
        <end position="431"/>
    </location>
</feature>
<feature type="active site" description="Proton acceptor" evidence="1">
    <location>
        <position position="323"/>
    </location>
</feature>
<feature type="active site" description="Proton acceptor" evidence="1">
    <location>
        <position position="324"/>
    </location>
</feature>
<feature type="binding site" evidence="1">
    <location>
        <position position="127"/>
    </location>
    <ligand>
        <name>NAD(+)</name>
        <dbReference type="ChEBI" id="CHEBI:57540"/>
    </ligand>
</feature>
<feature type="binding site" evidence="1">
    <location>
        <position position="185"/>
    </location>
    <ligand>
        <name>NAD(+)</name>
        <dbReference type="ChEBI" id="CHEBI:57540"/>
    </ligand>
</feature>
<feature type="binding site" evidence="1">
    <location>
        <position position="208"/>
    </location>
    <ligand>
        <name>NAD(+)</name>
        <dbReference type="ChEBI" id="CHEBI:57540"/>
    </ligand>
</feature>
<feature type="binding site" evidence="1">
    <location>
        <position position="234"/>
    </location>
    <ligand>
        <name>substrate</name>
    </ligand>
</feature>
<feature type="binding site" evidence="1">
    <location>
        <position position="256"/>
    </location>
    <ligand>
        <name>substrate</name>
    </ligand>
</feature>
<feature type="binding site" evidence="1">
    <location>
        <position position="256"/>
    </location>
    <ligand>
        <name>Zn(2+)</name>
        <dbReference type="ChEBI" id="CHEBI:29105"/>
    </ligand>
</feature>
<feature type="binding site" evidence="1">
    <location>
        <position position="259"/>
    </location>
    <ligand>
        <name>substrate</name>
    </ligand>
</feature>
<feature type="binding site" evidence="1">
    <location>
        <position position="259"/>
    </location>
    <ligand>
        <name>Zn(2+)</name>
        <dbReference type="ChEBI" id="CHEBI:29105"/>
    </ligand>
</feature>
<feature type="binding site" evidence="1">
    <location>
        <position position="324"/>
    </location>
    <ligand>
        <name>substrate</name>
    </ligand>
</feature>
<feature type="binding site" evidence="1">
    <location>
        <position position="357"/>
    </location>
    <ligand>
        <name>substrate</name>
    </ligand>
</feature>
<feature type="binding site" evidence="1">
    <location>
        <position position="357"/>
    </location>
    <ligand>
        <name>Zn(2+)</name>
        <dbReference type="ChEBI" id="CHEBI:29105"/>
    </ligand>
</feature>
<feature type="binding site" evidence="1">
    <location>
        <position position="411"/>
    </location>
    <ligand>
        <name>substrate</name>
    </ligand>
</feature>
<feature type="binding site" evidence="1">
    <location>
        <position position="416"/>
    </location>
    <ligand>
        <name>substrate</name>
    </ligand>
</feature>
<feature type="binding site" evidence="1">
    <location>
        <position position="416"/>
    </location>
    <ligand>
        <name>Zn(2+)</name>
        <dbReference type="ChEBI" id="CHEBI:29105"/>
    </ligand>
</feature>
<reference key="1">
    <citation type="journal article" date="2003" name="Genome Res.">
        <title>Comparative genome analysis of Vibrio vulnificus, a marine pathogen.</title>
        <authorList>
            <person name="Chen C.-Y."/>
            <person name="Wu K.-M."/>
            <person name="Chang Y.-C."/>
            <person name="Chang C.-H."/>
            <person name="Tsai H.-C."/>
            <person name="Liao T.-L."/>
            <person name="Liu Y.-M."/>
            <person name="Chen H.-J."/>
            <person name="Shen A.B.-T."/>
            <person name="Li J.-C."/>
            <person name="Su T.-L."/>
            <person name="Shao C.-P."/>
            <person name="Lee C.-T."/>
            <person name="Hor L.-I."/>
            <person name="Tsai S.-F."/>
        </authorList>
    </citation>
    <scope>NUCLEOTIDE SEQUENCE [LARGE SCALE GENOMIC DNA]</scope>
    <source>
        <strain>YJ016</strain>
    </source>
</reference>
<keyword id="KW-0028">Amino-acid biosynthesis</keyword>
<keyword id="KW-0368">Histidine biosynthesis</keyword>
<keyword id="KW-0479">Metal-binding</keyword>
<keyword id="KW-0520">NAD</keyword>
<keyword id="KW-0560">Oxidoreductase</keyword>
<keyword id="KW-0862">Zinc</keyword>
<accession>Q7MLS6</accession>
<gene>
    <name evidence="1" type="primary">hisD</name>
    <name type="ordered locus">VV1351</name>
</gene>
<proteinExistence type="inferred from homology"/>
<name>HISX_VIBVY</name>
<comment type="function">
    <text evidence="1">Catalyzes the sequential NAD-dependent oxidations of L-histidinol to L-histidinaldehyde and then to L-histidine.</text>
</comment>
<comment type="catalytic activity">
    <reaction evidence="1">
        <text>L-histidinol + 2 NAD(+) + H2O = L-histidine + 2 NADH + 3 H(+)</text>
        <dbReference type="Rhea" id="RHEA:20641"/>
        <dbReference type="ChEBI" id="CHEBI:15377"/>
        <dbReference type="ChEBI" id="CHEBI:15378"/>
        <dbReference type="ChEBI" id="CHEBI:57540"/>
        <dbReference type="ChEBI" id="CHEBI:57595"/>
        <dbReference type="ChEBI" id="CHEBI:57699"/>
        <dbReference type="ChEBI" id="CHEBI:57945"/>
        <dbReference type="EC" id="1.1.1.23"/>
    </reaction>
</comment>
<comment type="cofactor">
    <cofactor evidence="1">
        <name>Zn(2+)</name>
        <dbReference type="ChEBI" id="CHEBI:29105"/>
    </cofactor>
    <text evidence="1">Binds 1 zinc ion per subunit.</text>
</comment>
<comment type="pathway">
    <text evidence="1">Amino-acid biosynthesis; L-histidine biosynthesis; L-histidine from 5-phospho-alpha-D-ribose 1-diphosphate: step 9/9.</text>
</comment>
<comment type="similarity">
    <text evidence="1">Belongs to the histidinol dehydrogenase family.</text>
</comment>
<evidence type="ECO:0000255" key="1">
    <source>
        <dbReference type="HAMAP-Rule" id="MF_01024"/>
    </source>
</evidence>
<sequence length="431" mass="46069">MRTVVWQSLSETQQDAILERPAITEGANITAAVAEVIAKVRAEGDAALFELTEKFDRIKPESIRVTEQEIEEASARLTAKMKQALEQAYANIAKFHNAQKPTPIKVETQPGVVCEQVTRPIQKVGLYIPGGSAPLPSTVLMLGVPAQIAGCRKVVLCSPPPIADEILYVAKLCNIDEVYNVGGGQAVAAMAYGTESVTKVDKIFGPGNAYVTEAKRQVSNDFRGAAIDMPAGPSEVLVIADETADADFIAADLLSQAEHGPDSQVVLVTPSVLIADQVTDAVQKQLKQLSRASIAEKALASSLIIIADSLTQAVSISNYYGPEHLIVQTKNPRELLPLLDNAGSIFLGDWSPESAGDYASGTNHVLPTYGYTRTYSSLGLADFSKRMTVQELSAEGLKNLAPTVVTMAEAEGLDAHKRAVTIRVEKLTARS</sequence>
<dbReference type="EC" id="1.1.1.23" evidence="1"/>
<dbReference type="EMBL" id="BA000037">
    <property type="protein sequence ID" value="BAC94115.1"/>
    <property type="molecule type" value="Genomic_DNA"/>
</dbReference>
<dbReference type="RefSeq" id="WP_011150020.1">
    <property type="nucleotide sequence ID" value="NC_005139.1"/>
</dbReference>
<dbReference type="SMR" id="Q7MLS6"/>
<dbReference type="STRING" id="672.VV93_v1c12640"/>
<dbReference type="KEGG" id="vvy:VV1351"/>
<dbReference type="PATRIC" id="fig|196600.6.peg.1340"/>
<dbReference type="eggNOG" id="COG0141">
    <property type="taxonomic scope" value="Bacteria"/>
</dbReference>
<dbReference type="HOGENOM" id="CLU_006732_3_0_6"/>
<dbReference type="UniPathway" id="UPA00031">
    <property type="reaction ID" value="UER00014"/>
</dbReference>
<dbReference type="Proteomes" id="UP000002675">
    <property type="component" value="Chromosome I"/>
</dbReference>
<dbReference type="GO" id="GO:0005829">
    <property type="term" value="C:cytosol"/>
    <property type="evidence" value="ECO:0007669"/>
    <property type="project" value="TreeGrafter"/>
</dbReference>
<dbReference type="GO" id="GO:0004399">
    <property type="term" value="F:histidinol dehydrogenase activity"/>
    <property type="evidence" value="ECO:0007669"/>
    <property type="project" value="UniProtKB-UniRule"/>
</dbReference>
<dbReference type="GO" id="GO:0051287">
    <property type="term" value="F:NAD binding"/>
    <property type="evidence" value="ECO:0007669"/>
    <property type="project" value="InterPro"/>
</dbReference>
<dbReference type="GO" id="GO:0008270">
    <property type="term" value="F:zinc ion binding"/>
    <property type="evidence" value="ECO:0007669"/>
    <property type="project" value="UniProtKB-UniRule"/>
</dbReference>
<dbReference type="GO" id="GO:0000105">
    <property type="term" value="P:L-histidine biosynthetic process"/>
    <property type="evidence" value="ECO:0007669"/>
    <property type="project" value="UniProtKB-UniRule"/>
</dbReference>
<dbReference type="CDD" id="cd06572">
    <property type="entry name" value="Histidinol_dh"/>
    <property type="match status" value="1"/>
</dbReference>
<dbReference type="FunFam" id="3.40.50.1980:FF:000001">
    <property type="entry name" value="Histidinol dehydrogenase"/>
    <property type="match status" value="1"/>
</dbReference>
<dbReference type="FunFam" id="1.20.5.1300:FF:000002">
    <property type="entry name" value="Histidinol dehydrogenase, chloroplastic"/>
    <property type="match status" value="1"/>
</dbReference>
<dbReference type="FunFam" id="3.40.50.1980:FF:000002">
    <property type="entry name" value="Histidinol dehydrogenase, chloroplastic"/>
    <property type="match status" value="1"/>
</dbReference>
<dbReference type="Gene3D" id="1.20.5.1300">
    <property type="match status" value="1"/>
</dbReference>
<dbReference type="Gene3D" id="3.40.50.1980">
    <property type="entry name" value="Nitrogenase molybdenum iron protein domain"/>
    <property type="match status" value="2"/>
</dbReference>
<dbReference type="HAMAP" id="MF_01024">
    <property type="entry name" value="HisD"/>
    <property type="match status" value="1"/>
</dbReference>
<dbReference type="InterPro" id="IPR016161">
    <property type="entry name" value="Ald_DH/histidinol_DH"/>
</dbReference>
<dbReference type="InterPro" id="IPR001692">
    <property type="entry name" value="Histidinol_DH_CS"/>
</dbReference>
<dbReference type="InterPro" id="IPR022695">
    <property type="entry name" value="Histidinol_DH_monofunct"/>
</dbReference>
<dbReference type="InterPro" id="IPR012131">
    <property type="entry name" value="Hstdl_DH"/>
</dbReference>
<dbReference type="NCBIfam" id="TIGR00069">
    <property type="entry name" value="hisD"/>
    <property type="match status" value="1"/>
</dbReference>
<dbReference type="PANTHER" id="PTHR21256:SF2">
    <property type="entry name" value="HISTIDINE BIOSYNTHESIS TRIFUNCTIONAL PROTEIN"/>
    <property type="match status" value="1"/>
</dbReference>
<dbReference type="PANTHER" id="PTHR21256">
    <property type="entry name" value="HISTIDINOL DEHYDROGENASE HDH"/>
    <property type="match status" value="1"/>
</dbReference>
<dbReference type="Pfam" id="PF00815">
    <property type="entry name" value="Histidinol_dh"/>
    <property type="match status" value="1"/>
</dbReference>
<dbReference type="PIRSF" id="PIRSF000099">
    <property type="entry name" value="Histidinol_dh"/>
    <property type="match status" value="1"/>
</dbReference>
<dbReference type="PRINTS" id="PR00083">
    <property type="entry name" value="HOLDHDRGNASE"/>
</dbReference>
<dbReference type="SUPFAM" id="SSF53720">
    <property type="entry name" value="ALDH-like"/>
    <property type="match status" value="1"/>
</dbReference>
<dbReference type="PROSITE" id="PS00611">
    <property type="entry name" value="HISOL_DEHYDROGENASE"/>
    <property type="match status" value="1"/>
</dbReference>